<keyword id="KW-0119">Carbohydrate metabolism</keyword>
<keyword id="KW-0210">Decarboxylase</keyword>
<keyword id="KW-0456">Lyase</keyword>
<keyword id="KW-0460">Magnesium</keyword>
<keyword id="KW-0479">Metal-binding</keyword>
<keyword id="KW-1185">Reference proteome</keyword>
<gene>
    <name type="primary">sgbH</name>
    <name type="ordered locus">HI_1024</name>
</gene>
<organism>
    <name type="scientific">Haemophilus influenzae (strain ATCC 51907 / DSM 11121 / KW20 / Rd)</name>
    <dbReference type="NCBI Taxonomy" id="71421"/>
    <lineage>
        <taxon>Bacteria</taxon>
        <taxon>Pseudomonadati</taxon>
        <taxon>Pseudomonadota</taxon>
        <taxon>Gammaproteobacteria</taxon>
        <taxon>Pasteurellales</taxon>
        <taxon>Pasteurellaceae</taxon>
        <taxon>Haemophilus</taxon>
    </lineage>
</organism>
<sequence length="225" mass="24867">MGKPLLQIALDAQYLETALVDVKQIEHNIDIIEVGTILACSEGMRAVRILRALYPNQILVCDLKTTDAGATLAKMAFEAGADWLTVSAAAHPATKAACQKVAEEFNKIQPNLGVPKEIQIELYGNWNFDEVKNWLQLGIKQAIYHRSRDAELSGLSWSNQDIENIEKLDSLGIELSITGGITPDDLHLFKNTKNLKAFIAGRALVGKSGREIAEQLKQKIGQFWI</sequence>
<protein>
    <recommendedName>
        <fullName>Probable 3-keto-L-gulonate-6-phosphate decarboxylase</fullName>
        <shortName>KGPDC</shortName>
        <ecNumber>4.1.1.85</ecNumber>
    </recommendedName>
    <alternativeName>
        <fullName>3-dehydro-L-gulonate-6-phosphate decarboxylase</fullName>
    </alternativeName>
</protein>
<reference key="1">
    <citation type="journal article" date="1995" name="Science">
        <title>Whole-genome random sequencing and assembly of Haemophilus influenzae Rd.</title>
        <authorList>
            <person name="Fleischmann R.D."/>
            <person name="Adams M.D."/>
            <person name="White O."/>
            <person name="Clayton R.A."/>
            <person name="Kirkness E.F."/>
            <person name="Kerlavage A.R."/>
            <person name="Bult C.J."/>
            <person name="Tomb J.-F."/>
            <person name="Dougherty B.A."/>
            <person name="Merrick J.M."/>
            <person name="McKenney K."/>
            <person name="Sutton G.G."/>
            <person name="FitzHugh W."/>
            <person name="Fields C.A."/>
            <person name="Gocayne J.D."/>
            <person name="Scott J.D."/>
            <person name="Shirley R."/>
            <person name="Liu L.-I."/>
            <person name="Glodek A."/>
            <person name="Kelley J.M."/>
            <person name="Weidman J.F."/>
            <person name="Phillips C.A."/>
            <person name="Spriggs T."/>
            <person name="Hedblom E."/>
            <person name="Cotton M.D."/>
            <person name="Utterback T.R."/>
            <person name="Hanna M.C."/>
            <person name="Nguyen D.T."/>
            <person name="Saudek D.M."/>
            <person name="Brandon R.C."/>
            <person name="Fine L.D."/>
            <person name="Fritchman J.L."/>
            <person name="Fuhrmann J.L."/>
            <person name="Geoghagen N.S.M."/>
            <person name="Gnehm C.L."/>
            <person name="McDonald L.A."/>
            <person name="Small K.V."/>
            <person name="Fraser C.M."/>
            <person name="Smith H.O."/>
            <person name="Venter J.C."/>
        </authorList>
    </citation>
    <scope>NUCLEOTIDE SEQUENCE [LARGE SCALE GENOMIC DNA]</scope>
    <source>
        <strain>ATCC 51907 / DSM 11121 / KW20 / Rd</strain>
    </source>
</reference>
<reference key="2">
    <citation type="journal article" date="1997" name="Microbiology">
        <title>Is the ribulose monophosphate pathway widely distributed in bacteria?</title>
        <authorList>
            <person name="Reizer J."/>
            <person name="Reizer A."/>
            <person name="Saier M.H. Jr."/>
        </authorList>
    </citation>
    <scope>DISCUSSION OF SEQUENCE</scope>
</reference>
<comment type="function">
    <text evidence="1">Catalyzes the decarboxylation of 3-keto-L-gulonate-6-P into L-xylulose-5-P.</text>
</comment>
<comment type="catalytic activity">
    <reaction>
        <text>3-dehydro-L-gulonate 6-phosphate + H(+) = L-xylulose 5-phosphate + CO2</text>
        <dbReference type="Rhea" id="RHEA:14353"/>
        <dbReference type="ChEBI" id="CHEBI:15378"/>
        <dbReference type="ChEBI" id="CHEBI:16526"/>
        <dbReference type="ChEBI" id="CHEBI:57829"/>
        <dbReference type="ChEBI" id="CHEBI:58774"/>
        <dbReference type="EC" id="4.1.1.85"/>
    </reaction>
</comment>
<comment type="cofactor">
    <cofactor evidence="1">
        <name>Mg(2+)</name>
        <dbReference type="ChEBI" id="CHEBI:18420"/>
    </cofactor>
    <text evidence="1">Binds 1 Mg(2+) ion per subunit.</text>
</comment>
<comment type="subunit">
    <text evidence="1">Homodimer.</text>
</comment>
<comment type="similarity">
    <text evidence="2">Belongs to the HPS/KGPDC family. KGPDC subfamily.</text>
</comment>
<proteinExistence type="inferred from homology"/>
<accession>P44988</accession>
<name>SGBH_HAEIN</name>
<evidence type="ECO:0000250" key="1"/>
<evidence type="ECO:0000305" key="2"/>
<dbReference type="EC" id="4.1.1.85"/>
<dbReference type="EMBL" id="L42023">
    <property type="protein sequence ID" value="AAC22684.1"/>
    <property type="molecule type" value="Genomic_DNA"/>
</dbReference>
<dbReference type="PIR" id="F64164">
    <property type="entry name" value="F64164"/>
</dbReference>
<dbReference type="RefSeq" id="NP_439184.1">
    <property type="nucleotide sequence ID" value="NC_000907.1"/>
</dbReference>
<dbReference type="SMR" id="P44988"/>
<dbReference type="STRING" id="71421.HI_1024"/>
<dbReference type="EnsemblBacteria" id="AAC22684">
    <property type="protein sequence ID" value="AAC22684"/>
    <property type="gene ID" value="HI_1024"/>
</dbReference>
<dbReference type="KEGG" id="hin:HI_1024"/>
<dbReference type="PATRIC" id="fig|71421.8.peg.1068"/>
<dbReference type="eggNOG" id="COG0269">
    <property type="taxonomic scope" value="Bacteria"/>
</dbReference>
<dbReference type="HOGENOM" id="CLU_081825_0_0_6"/>
<dbReference type="OrthoDB" id="43475at2"/>
<dbReference type="PhylomeDB" id="P44988"/>
<dbReference type="BioCyc" id="HINF71421:G1GJ1-1064-MONOMER"/>
<dbReference type="Proteomes" id="UP000000579">
    <property type="component" value="Chromosome"/>
</dbReference>
<dbReference type="GO" id="GO:0033982">
    <property type="term" value="F:3-dehydro-L-gulonate-6-phosphate decarboxylase activity"/>
    <property type="evidence" value="ECO:0000318"/>
    <property type="project" value="GO_Central"/>
</dbReference>
<dbReference type="GO" id="GO:0046872">
    <property type="term" value="F:metal ion binding"/>
    <property type="evidence" value="ECO:0007669"/>
    <property type="project" value="UniProtKB-KW"/>
</dbReference>
<dbReference type="GO" id="GO:0004590">
    <property type="term" value="F:orotidine-5'-phosphate decarboxylase activity"/>
    <property type="evidence" value="ECO:0007669"/>
    <property type="project" value="InterPro"/>
</dbReference>
<dbReference type="GO" id="GO:0006207">
    <property type="term" value="P:'de novo' pyrimidine nucleobase biosynthetic process"/>
    <property type="evidence" value="ECO:0007669"/>
    <property type="project" value="InterPro"/>
</dbReference>
<dbReference type="GO" id="GO:0019854">
    <property type="term" value="P:L-ascorbic acid catabolic process"/>
    <property type="evidence" value="ECO:0000318"/>
    <property type="project" value="GO_Central"/>
</dbReference>
<dbReference type="CDD" id="cd04726">
    <property type="entry name" value="KGPDC_HPS"/>
    <property type="match status" value="1"/>
</dbReference>
<dbReference type="FunFam" id="3.20.20.70:FF:000022">
    <property type="entry name" value="3-keto-L-gulonate-6-phosphate decarboxylase UlaD"/>
    <property type="match status" value="1"/>
</dbReference>
<dbReference type="Gene3D" id="3.20.20.70">
    <property type="entry name" value="Aldolase class I"/>
    <property type="match status" value="1"/>
</dbReference>
<dbReference type="InterPro" id="IPR013785">
    <property type="entry name" value="Aldolase_TIM"/>
</dbReference>
<dbReference type="InterPro" id="IPR041710">
    <property type="entry name" value="HPS/KGPDC"/>
</dbReference>
<dbReference type="InterPro" id="IPR001754">
    <property type="entry name" value="OMPdeCOase_dom"/>
</dbReference>
<dbReference type="InterPro" id="IPR011060">
    <property type="entry name" value="RibuloseP-bd_barrel"/>
</dbReference>
<dbReference type="NCBIfam" id="NF009832">
    <property type="entry name" value="PRK13306.1"/>
    <property type="match status" value="1"/>
</dbReference>
<dbReference type="PANTHER" id="PTHR35039">
    <property type="entry name" value="3-KETO-L-GULONATE-6-PHOSPHATE DECARBOXYLASE SGBH-RELATED"/>
    <property type="match status" value="1"/>
</dbReference>
<dbReference type="PANTHER" id="PTHR35039:SF3">
    <property type="entry name" value="3-KETO-L-GULONATE-6-PHOSPHATE DECARBOXYLASE SGBH-RELATED"/>
    <property type="match status" value="1"/>
</dbReference>
<dbReference type="Pfam" id="PF00215">
    <property type="entry name" value="OMPdecase"/>
    <property type="match status" value="1"/>
</dbReference>
<dbReference type="SMART" id="SM00934">
    <property type="entry name" value="OMPdecase"/>
    <property type="match status" value="1"/>
</dbReference>
<dbReference type="SUPFAM" id="SSF51366">
    <property type="entry name" value="Ribulose-phoshate binding barrel"/>
    <property type="match status" value="1"/>
</dbReference>
<feature type="chain" id="PRO_0000212106" description="Probable 3-keto-L-gulonate-6-phosphate decarboxylase">
    <location>
        <begin position="1"/>
        <end position="225"/>
    </location>
</feature>
<feature type="binding site" evidence="1">
    <location>
        <position position="11"/>
    </location>
    <ligand>
        <name>substrate</name>
    </ligand>
</feature>
<feature type="binding site" evidence="1">
    <location>
        <position position="33"/>
    </location>
    <ligand>
        <name>Mg(2+)</name>
        <dbReference type="ChEBI" id="CHEBI:18420"/>
    </ligand>
</feature>
<feature type="binding site" evidence="1">
    <location>
        <position position="62"/>
    </location>
    <ligand>
        <name>Mg(2+)</name>
        <dbReference type="ChEBI" id="CHEBI:18420"/>
    </ligand>
</feature>
<feature type="binding site" evidence="1">
    <location>
        <position position="202"/>
    </location>
    <ligand>
        <name>substrate</name>
    </ligand>
</feature>
<feature type="site" description="Transition state stabilizer" evidence="1">
    <location>
        <position position="64"/>
    </location>
</feature>
<feature type="site" description="Transition state stabilizer" evidence="1">
    <location>
        <position position="67"/>
    </location>
</feature>